<protein>
    <recommendedName>
        <fullName>Secreted phosphoprotein 24</fullName>
        <shortName>Spp-24</shortName>
    </recommendedName>
    <alternativeName>
        <fullName>Secreted phosphoprotein 2</fullName>
    </alternativeName>
</protein>
<organism>
    <name type="scientific">Rattus norvegicus</name>
    <name type="common">Rat</name>
    <dbReference type="NCBI Taxonomy" id="10116"/>
    <lineage>
        <taxon>Eukaryota</taxon>
        <taxon>Metazoa</taxon>
        <taxon>Chordata</taxon>
        <taxon>Craniata</taxon>
        <taxon>Vertebrata</taxon>
        <taxon>Euteleostomi</taxon>
        <taxon>Mammalia</taxon>
        <taxon>Eutheria</taxon>
        <taxon>Euarchontoglires</taxon>
        <taxon>Glires</taxon>
        <taxon>Rodentia</taxon>
        <taxon>Myomorpha</taxon>
        <taxon>Muroidea</taxon>
        <taxon>Muridae</taxon>
        <taxon>Murinae</taxon>
        <taxon>Rattus</taxon>
    </lineage>
</organism>
<comment type="function">
    <text evidence="1">Could coordinate an aspect of bone turnover.</text>
</comment>
<comment type="subcellular location">
    <subcellularLocation>
        <location evidence="1">Secreted</location>
    </subcellularLocation>
</comment>
<comment type="PTM">
    <text evidence="1">Multiply phosphorylated at serine residues.</text>
</comment>
<comment type="PTM">
    <text evidence="1">Phosphorylation sites are present in the extracellular medium.</text>
</comment>
<comment type="similarity">
    <text evidence="4">Belongs to the SPP2 family.</text>
</comment>
<gene>
    <name type="primary">Spp2</name>
    <name type="synonym">Spp24</name>
</gene>
<proteinExistence type="evidence at protein level"/>
<feature type="signal peptide" evidence="3">
    <location>
        <begin position="1"/>
        <end position="23"/>
    </location>
</feature>
<feature type="chain" id="PRO_0000072146" description="Secreted phosphoprotein 24">
    <location>
        <begin position="24"/>
        <end position="203"/>
    </location>
</feature>
<feature type="modified residue" description="Phosphoserine" evidence="2">
    <location>
        <position position="90"/>
    </location>
</feature>
<feature type="modified residue" description="Phosphoserine" evidence="5">
    <location>
        <position position="137"/>
    </location>
</feature>
<feature type="modified residue" description="Phosphoserine" evidence="5">
    <location>
        <position position="138"/>
    </location>
</feature>
<feature type="modified residue" description="Phosphoserine" evidence="5">
    <location>
        <position position="174"/>
    </location>
</feature>
<feature type="disulfide bond" evidence="1">
    <location>
        <begin position="86"/>
        <end position="96"/>
    </location>
</feature>
<feature type="disulfide bond" evidence="1">
    <location>
        <begin position="109"/>
        <end position="127"/>
    </location>
</feature>
<feature type="sequence conflict" description="In Ref. 2; AAA87903." evidence="4" ref="2">
    <original>A</original>
    <variation>R</variation>
    <location>
        <position position="130"/>
    </location>
</feature>
<keyword id="KW-1015">Disulfide bond</keyword>
<keyword id="KW-0597">Phosphoprotein</keyword>
<keyword id="KW-1185">Reference proteome</keyword>
<keyword id="KW-0964">Secreted</keyword>
<keyword id="KW-0732">Signal</keyword>
<dbReference type="EMBL" id="BC088193">
    <property type="protein sequence ID" value="AAH88193.1"/>
    <property type="molecule type" value="mRNA"/>
</dbReference>
<dbReference type="EMBL" id="U19485">
    <property type="protein sequence ID" value="AAA87903.1"/>
    <property type="molecule type" value="mRNA"/>
</dbReference>
<dbReference type="RefSeq" id="NP_446029.1">
    <property type="nucleotide sequence ID" value="NM_053577.1"/>
</dbReference>
<dbReference type="SMR" id="Q62740"/>
<dbReference type="FunCoup" id="Q62740">
    <property type="interactions" value="10"/>
</dbReference>
<dbReference type="STRING" id="10116.ENSRNOP00000075164"/>
<dbReference type="iPTMnet" id="Q62740"/>
<dbReference type="PhosphoSitePlus" id="Q62740"/>
<dbReference type="PaxDb" id="10116-ENSRNOP00000026108"/>
<dbReference type="GeneID" id="94168"/>
<dbReference type="KEGG" id="rno:94168"/>
<dbReference type="UCSC" id="RGD:708488">
    <property type="organism name" value="rat"/>
</dbReference>
<dbReference type="AGR" id="RGD:708488"/>
<dbReference type="CTD" id="6694"/>
<dbReference type="RGD" id="708488">
    <property type="gene designation" value="Spp2"/>
</dbReference>
<dbReference type="eggNOG" id="ENOG502S7TB">
    <property type="taxonomic scope" value="Eukaryota"/>
</dbReference>
<dbReference type="InParanoid" id="Q62740"/>
<dbReference type="OrthoDB" id="9944258at2759"/>
<dbReference type="PhylomeDB" id="Q62740"/>
<dbReference type="TreeFam" id="TF335972"/>
<dbReference type="Reactome" id="R-RNO-114608">
    <property type="pathway name" value="Platelet degranulation"/>
</dbReference>
<dbReference type="Reactome" id="R-RNO-381426">
    <property type="pathway name" value="Regulation of Insulin-like Growth Factor (IGF) transport and uptake by Insulin-like Growth Factor Binding Proteins (IGFBPs)"/>
</dbReference>
<dbReference type="Reactome" id="R-RNO-8957275">
    <property type="pathway name" value="Post-translational protein phosphorylation"/>
</dbReference>
<dbReference type="PRO" id="PR:Q62740"/>
<dbReference type="Proteomes" id="UP000002494">
    <property type="component" value="Unplaced"/>
</dbReference>
<dbReference type="GO" id="GO:0005576">
    <property type="term" value="C:extracellular region"/>
    <property type="evidence" value="ECO:0007669"/>
    <property type="project" value="UniProtKB-SubCell"/>
</dbReference>
<dbReference type="GO" id="GO:0032991">
    <property type="term" value="C:protein-containing complex"/>
    <property type="evidence" value="ECO:0000314"/>
    <property type="project" value="RGD"/>
</dbReference>
<dbReference type="GO" id="GO:0046849">
    <property type="term" value="P:bone remodeling"/>
    <property type="evidence" value="ECO:0007669"/>
    <property type="project" value="InterPro"/>
</dbReference>
<dbReference type="GO" id="GO:0065003">
    <property type="term" value="P:protein-containing complex assembly"/>
    <property type="evidence" value="ECO:0000353"/>
    <property type="project" value="RGD"/>
</dbReference>
<dbReference type="Gene3D" id="3.10.450.10">
    <property type="match status" value="1"/>
</dbReference>
<dbReference type="InterPro" id="IPR046350">
    <property type="entry name" value="Cystatin_sf"/>
</dbReference>
<dbReference type="InterPro" id="IPR010892">
    <property type="entry name" value="Spp-24"/>
</dbReference>
<dbReference type="PANTHER" id="PTHR15444">
    <property type="entry name" value="SECRETED PHOSPHOPROTEIN 24"/>
    <property type="match status" value="1"/>
</dbReference>
<dbReference type="PANTHER" id="PTHR15444:SF4">
    <property type="entry name" value="SECRETED PHOSPHOPROTEIN 24"/>
    <property type="match status" value="1"/>
</dbReference>
<dbReference type="Pfam" id="PF07448">
    <property type="entry name" value="Spp-24"/>
    <property type="match status" value="1"/>
</dbReference>
<dbReference type="SUPFAM" id="SSF54403">
    <property type="entry name" value="Cystatin/monellin"/>
    <property type="match status" value="1"/>
</dbReference>
<name>SPP24_RAT</name>
<sequence>MELATMKTLVMLVLGMHYWCASGFPVYDYDPSSLQEALSASVAKVNSQSLSPYLFRATRSSLKRVNVLDEDTLVMNLEFTVQETTCLRESGDPSTCAFQRGYSVPTAACRSTVQMSKGQVKDVWAHCRWASTSESNSSEEMIFGDMARSHRRRNDYLLGFLYDEPKGEQFYDRSIEITRRGHPPAHRRFLNLQRRARVNSGFE</sequence>
<evidence type="ECO:0000250" key="1"/>
<evidence type="ECO:0000250" key="2">
    <source>
        <dbReference type="UniProtKB" id="Q13103"/>
    </source>
</evidence>
<evidence type="ECO:0000255" key="3"/>
<evidence type="ECO:0000305" key="4"/>
<evidence type="ECO:0007744" key="5">
    <source>
    </source>
</evidence>
<accession>Q62740</accession>
<accession>Q5M874</accession>
<reference key="1">
    <citation type="journal article" date="2004" name="Genome Res.">
        <title>The status, quality, and expansion of the NIH full-length cDNA project: the Mammalian Gene Collection (MGC).</title>
        <authorList>
            <consortium name="The MGC Project Team"/>
        </authorList>
    </citation>
    <scope>NUCLEOTIDE SEQUENCE [LARGE SCALE MRNA]</scope>
    <source>
        <tissue>Liver</tissue>
    </source>
</reference>
<reference key="2">
    <citation type="submission" date="1996-02" db="EMBL/GenBank/DDBJ databases">
        <authorList>
            <person name="Hu B."/>
            <person name="Price P.A."/>
        </authorList>
    </citation>
    <scope>NUCLEOTIDE SEQUENCE [MRNA] OF 24-203</scope>
    <source>
        <strain>Sprague-Dawley</strain>
        <tissue>Liver</tissue>
    </source>
</reference>
<reference key="3">
    <citation type="journal article" date="2012" name="Nat. Commun.">
        <title>Quantitative maps of protein phosphorylation sites across 14 different rat organs and tissues.</title>
        <authorList>
            <person name="Lundby A."/>
            <person name="Secher A."/>
            <person name="Lage K."/>
            <person name="Nordsborg N.B."/>
            <person name="Dmytriyev A."/>
            <person name="Lundby C."/>
            <person name="Olsen J.V."/>
        </authorList>
    </citation>
    <scope>PHOSPHORYLATION [LARGE SCALE ANALYSIS] AT SER-137; SER-138 AND SER-174</scope>
    <scope>IDENTIFICATION BY MASS SPECTROMETRY [LARGE SCALE ANALYSIS]</scope>
</reference>